<organism>
    <name type="scientific">Clostridium tetani (strain Massachusetts / E88)</name>
    <dbReference type="NCBI Taxonomy" id="212717"/>
    <lineage>
        <taxon>Bacteria</taxon>
        <taxon>Bacillati</taxon>
        <taxon>Bacillota</taxon>
        <taxon>Clostridia</taxon>
        <taxon>Eubacteriales</taxon>
        <taxon>Clostridiaceae</taxon>
        <taxon>Clostridium</taxon>
    </lineage>
</organism>
<name>RL22_CLOTE</name>
<protein>
    <recommendedName>
        <fullName evidence="1">Large ribosomal subunit protein uL22</fullName>
    </recommendedName>
    <alternativeName>
        <fullName evidence="2">50S ribosomal protein L22</fullName>
    </alternativeName>
</protein>
<keyword id="KW-1185">Reference proteome</keyword>
<keyword id="KW-0687">Ribonucleoprotein</keyword>
<keyword id="KW-0689">Ribosomal protein</keyword>
<keyword id="KW-0694">RNA-binding</keyword>
<keyword id="KW-0699">rRNA-binding</keyword>
<dbReference type="EMBL" id="AE015927">
    <property type="protein sequence ID" value="AAO37053.1"/>
    <property type="molecule type" value="Genomic_DNA"/>
</dbReference>
<dbReference type="RefSeq" id="WP_011100714.1">
    <property type="nucleotide sequence ID" value="NC_004557.1"/>
</dbReference>
<dbReference type="SMR" id="Q890P2"/>
<dbReference type="STRING" id="212717.CTC_02597"/>
<dbReference type="GeneID" id="24252517"/>
<dbReference type="KEGG" id="ctc:CTC_02597"/>
<dbReference type="HOGENOM" id="CLU_083987_3_3_9"/>
<dbReference type="OrthoDB" id="9805969at2"/>
<dbReference type="Proteomes" id="UP000001412">
    <property type="component" value="Chromosome"/>
</dbReference>
<dbReference type="GO" id="GO:0022625">
    <property type="term" value="C:cytosolic large ribosomal subunit"/>
    <property type="evidence" value="ECO:0007669"/>
    <property type="project" value="TreeGrafter"/>
</dbReference>
<dbReference type="GO" id="GO:0019843">
    <property type="term" value="F:rRNA binding"/>
    <property type="evidence" value="ECO:0007669"/>
    <property type="project" value="UniProtKB-UniRule"/>
</dbReference>
<dbReference type="GO" id="GO:0003735">
    <property type="term" value="F:structural constituent of ribosome"/>
    <property type="evidence" value="ECO:0007669"/>
    <property type="project" value="InterPro"/>
</dbReference>
<dbReference type="GO" id="GO:0006412">
    <property type="term" value="P:translation"/>
    <property type="evidence" value="ECO:0007669"/>
    <property type="project" value="UniProtKB-UniRule"/>
</dbReference>
<dbReference type="CDD" id="cd00336">
    <property type="entry name" value="Ribosomal_L22"/>
    <property type="match status" value="1"/>
</dbReference>
<dbReference type="FunFam" id="3.90.470.10:FF:000011">
    <property type="entry name" value="50S ribosomal protein L22"/>
    <property type="match status" value="1"/>
</dbReference>
<dbReference type="Gene3D" id="3.90.470.10">
    <property type="entry name" value="Ribosomal protein L22/L17"/>
    <property type="match status" value="1"/>
</dbReference>
<dbReference type="HAMAP" id="MF_01331_B">
    <property type="entry name" value="Ribosomal_uL22_B"/>
    <property type="match status" value="1"/>
</dbReference>
<dbReference type="InterPro" id="IPR001063">
    <property type="entry name" value="Ribosomal_uL22"/>
</dbReference>
<dbReference type="InterPro" id="IPR005727">
    <property type="entry name" value="Ribosomal_uL22_bac/chlpt-type"/>
</dbReference>
<dbReference type="InterPro" id="IPR047867">
    <property type="entry name" value="Ribosomal_uL22_bac/org-type"/>
</dbReference>
<dbReference type="InterPro" id="IPR018260">
    <property type="entry name" value="Ribosomal_uL22_CS"/>
</dbReference>
<dbReference type="InterPro" id="IPR036394">
    <property type="entry name" value="Ribosomal_uL22_sf"/>
</dbReference>
<dbReference type="NCBIfam" id="TIGR01044">
    <property type="entry name" value="rplV_bact"/>
    <property type="match status" value="1"/>
</dbReference>
<dbReference type="PANTHER" id="PTHR13501">
    <property type="entry name" value="CHLOROPLAST 50S RIBOSOMAL PROTEIN L22-RELATED"/>
    <property type="match status" value="1"/>
</dbReference>
<dbReference type="PANTHER" id="PTHR13501:SF8">
    <property type="entry name" value="LARGE RIBOSOMAL SUBUNIT PROTEIN UL22M"/>
    <property type="match status" value="1"/>
</dbReference>
<dbReference type="Pfam" id="PF00237">
    <property type="entry name" value="Ribosomal_L22"/>
    <property type="match status" value="1"/>
</dbReference>
<dbReference type="SUPFAM" id="SSF54843">
    <property type="entry name" value="Ribosomal protein L22"/>
    <property type="match status" value="1"/>
</dbReference>
<dbReference type="PROSITE" id="PS00464">
    <property type="entry name" value="RIBOSOMAL_L22"/>
    <property type="match status" value="1"/>
</dbReference>
<gene>
    <name evidence="1" type="primary">rplV</name>
    <name type="ordered locus">CTC_02597</name>
</gene>
<reference key="1">
    <citation type="journal article" date="2003" name="Proc. Natl. Acad. Sci. U.S.A.">
        <title>The genome sequence of Clostridium tetani, the causative agent of tetanus disease.</title>
        <authorList>
            <person name="Brueggemann H."/>
            <person name="Baeumer S."/>
            <person name="Fricke W.F."/>
            <person name="Wiezer A."/>
            <person name="Liesegang H."/>
            <person name="Decker I."/>
            <person name="Herzberg C."/>
            <person name="Martinez-Arias R."/>
            <person name="Merkl R."/>
            <person name="Henne A."/>
            <person name="Gottschalk G."/>
        </authorList>
    </citation>
    <scope>NUCLEOTIDE SEQUENCE [LARGE SCALE GENOMIC DNA]</scope>
    <source>
        <strain>Massachusetts / E88</strain>
    </source>
</reference>
<feature type="chain" id="PRO_0000125145" description="Large ribosomal subunit protein uL22">
    <location>
        <begin position="1"/>
        <end position="111"/>
    </location>
</feature>
<comment type="function">
    <text evidence="1">This protein binds specifically to 23S rRNA; its binding is stimulated by other ribosomal proteins, e.g. L4, L17, and L20. It is important during the early stages of 50S assembly. It makes multiple contacts with different domains of the 23S rRNA in the assembled 50S subunit and ribosome (By similarity).</text>
</comment>
<comment type="function">
    <text evidence="1">The globular domain of the protein is located near the polypeptide exit tunnel on the outside of the subunit, while an extended beta-hairpin is found that lines the wall of the exit tunnel in the center of the 70S ribosome.</text>
</comment>
<comment type="subunit">
    <text evidence="1">Part of the 50S ribosomal subunit.</text>
</comment>
<comment type="similarity">
    <text evidence="1">Belongs to the universal ribosomal protein uL22 family.</text>
</comment>
<accession>Q890P2</accession>
<sequence length="111" mass="12436">MEAKAIAKYVRMSPRKVGVVLDLVRGKDVNEAFAILNYTPREAAVVINKVLKSAVANAENNLELDPSRLYVAEAYACQGPTLKRYQPHAQGRAFRINKRTSHVTLVVKERE</sequence>
<proteinExistence type="inferred from homology"/>
<evidence type="ECO:0000255" key="1">
    <source>
        <dbReference type="HAMAP-Rule" id="MF_01331"/>
    </source>
</evidence>
<evidence type="ECO:0000305" key="2"/>